<proteinExistence type="inferred from homology"/>
<name>CHED_OCEIH</name>
<reference key="1">
    <citation type="journal article" date="2002" name="Nucleic Acids Res.">
        <title>Genome sequence of Oceanobacillus iheyensis isolated from the Iheya Ridge and its unexpected adaptive capabilities to extreme environments.</title>
        <authorList>
            <person name="Takami H."/>
            <person name="Takaki Y."/>
            <person name="Uchiyama I."/>
        </authorList>
    </citation>
    <scope>NUCLEOTIDE SEQUENCE [LARGE SCALE GENOMIC DNA]</scope>
    <source>
        <strain>DSM 14371 / CIP 107618 / JCM 11309 / KCTC 3954 / HTE831</strain>
    </source>
</reference>
<evidence type="ECO:0000255" key="1">
    <source>
        <dbReference type="HAMAP-Rule" id="MF_01440"/>
    </source>
</evidence>
<accession>Q8EQV8</accession>
<organism>
    <name type="scientific">Oceanobacillus iheyensis (strain DSM 14371 / CIP 107618 / JCM 11309 / KCTC 3954 / HTE831)</name>
    <dbReference type="NCBI Taxonomy" id="221109"/>
    <lineage>
        <taxon>Bacteria</taxon>
        <taxon>Bacillati</taxon>
        <taxon>Bacillota</taxon>
        <taxon>Bacilli</taxon>
        <taxon>Bacillales</taxon>
        <taxon>Bacillaceae</taxon>
        <taxon>Oceanobacillus</taxon>
    </lineage>
</organism>
<gene>
    <name evidence="1" type="primary">cheD</name>
    <name type="ordered locus">OB1581</name>
</gene>
<protein>
    <recommendedName>
        <fullName evidence="1">Probable chemoreceptor glutamine deamidase CheD</fullName>
        <ecNumber evidence="1">3.5.1.44</ecNumber>
    </recommendedName>
</protein>
<dbReference type="EC" id="3.5.1.44" evidence="1"/>
<dbReference type="EMBL" id="BA000028">
    <property type="protein sequence ID" value="BAC13537.1"/>
    <property type="molecule type" value="Genomic_DNA"/>
</dbReference>
<dbReference type="RefSeq" id="WP_011065981.1">
    <property type="nucleotide sequence ID" value="NC_004193.1"/>
</dbReference>
<dbReference type="SMR" id="Q8EQV8"/>
<dbReference type="STRING" id="221109.gene:10733821"/>
<dbReference type="KEGG" id="oih:OB1581"/>
<dbReference type="eggNOG" id="COG1871">
    <property type="taxonomic scope" value="Bacteria"/>
</dbReference>
<dbReference type="HOGENOM" id="CLU_087854_2_0_9"/>
<dbReference type="OrthoDB" id="9807202at2"/>
<dbReference type="PhylomeDB" id="Q8EQV8"/>
<dbReference type="Proteomes" id="UP000000822">
    <property type="component" value="Chromosome"/>
</dbReference>
<dbReference type="GO" id="GO:0050568">
    <property type="term" value="F:protein-glutamine glutaminase activity"/>
    <property type="evidence" value="ECO:0007669"/>
    <property type="project" value="UniProtKB-UniRule"/>
</dbReference>
<dbReference type="GO" id="GO:0006935">
    <property type="term" value="P:chemotaxis"/>
    <property type="evidence" value="ECO:0007669"/>
    <property type="project" value="UniProtKB-UniRule"/>
</dbReference>
<dbReference type="CDD" id="cd16352">
    <property type="entry name" value="CheD"/>
    <property type="match status" value="1"/>
</dbReference>
<dbReference type="Gene3D" id="3.30.1330.200">
    <property type="match status" value="1"/>
</dbReference>
<dbReference type="HAMAP" id="MF_01440">
    <property type="entry name" value="CheD"/>
    <property type="match status" value="1"/>
</dbReference>
<dbReference type="InterPro" id="IPR038592">
    <property type="entry name" value="CheD-like_sf"/>
</dbReference>
<dbReference type="InterPro" id="IPR005659">
    <property type="entry name" value="Chemorcpt_Glu_NH3ase_CheD"/>
</dbReference>
<dbReference type="InterPro" id="IPR011324">
    <property type="entry name" value="Cytotoxic_necrot_fac-like_cat"/>
</dbReference>
<dbReference type="PANTHER" id="PTHR35147">
    <property type="entry name" value="CHEMORECEPTOR GLUTAMINE DEAMIDASE CHED-RELATED"/>
    <property type="match status" value="1"/>
</dbReference>
<dbReference type="PANTHER" id="PTHR35147:SF1">
    <property type="entry name" value="CHEMORECEPTOR GLUTAMINE DEAMIDASE CHED-RELATED"/>
    <property type="match status" value="1"/>
</dbReference>
<dbReference type="Pfam" id="PF03975">
    <property type="entry name" value="CheD"/>
    <property type="match status" value="1"/>
</dbReference>
<dbReference type="SUPFAM" id="SSF64438">
    <property type="entry name" value="CNF1/YfiH-like putative cysteine hydrolases"/>
    <property type="match status" value="1"/>
</dbReference>
<keyword id="KW-0145">Chemotaxis</keyword>
<keyword id="KW-0378">Hydrolase</keyword>
<keyword id="KW-1185">Reference proteome</keyword>
<sequence>MTSIETTVVKVGIADLKIIQFPQLIRTSGLGSCVGTVIYDDKKEIAGLSHVLLPYSQQGKQANTNPYKYADTAISYLYNELLKRGANQSSLKAKLAGGAQMFQLRTGSDLMRIGPRNVESVELALAEFGIPIVSKDVGGNLGRTIEFDPRSKLLAVRKINQEVIMI</sequence>
<feature type="chain" id="PRO_0000251047" description="Probable chemoreceptor glutamine deamidase CheD">
    <location>
        <begin position="1"/>
        <end position="166"/>
    </location>
</feature>
<comment type="function">
    <text evidence="1">Probably deamidates glutamine residues to glutamate on methyl-accepting chemotaxis receptors (MCPs), playing an important role in chemotaxis.</text>
</comment>
<comment type="catalytic activity">
    <reaction evidence="1">
        <text>L-glutaminyl-[protein] + H2O = L-glutamyl-[protein] + NH4(+)</text>
        <dbReference type="Rhea" id="RHEA:16441"/>
        <dbReference type="Rhea" id="RHEA-COMP:10207"/>
        <dbReference type="Rhea" id="RHEA-COMP:10208"/>
        <dbReference type="ChEBI" id="CHEBI:15377"/>
        <dbReference type="ChEBI" id="CHEBI:28938"/>
        <dbReference type="ChEBI" id="CHEBI:29973"/>
        <dbReference type="ChEBI" id="CHEBI:30011"/>
        <dbReference type="EC" id="3.5.1.44"/>
    </reaction>
</comment>
<comment type="similarity">
    <text evidence="1">Belongs to the CheD family.</text>
</comment>